<reference key="1">
    <citation type="journal article" date="2009" name="Genome Biol.">
        <title>A whole-genome assembly of the domestic cow, Bos taurus.</title>
        <authorList>
            <person name="Zimin A.V."/>
            <person name="Delcher A.L."/>
            <person name="Florea L."/>
            <person name="Kelley D.R."/>
            <person name="Schatz M.C."/>
            <person name="Puiu D."/>
            <person name="Hanrahan F."/>
            <person name="Pertea G."/>
            <person name="Van Tassell C.P."/>
            <person name="Sonstegard T.S."/>
            <person name="Marcais G."/>
            <person name="Roberts M."/>
            <person name="Subramanian P."/>
            <person name="Yorke J.A."/>
            <person name="Salzberg S.L."/>
        </authorList>
    </citation>
    <scope>NUCLEOTIDE SEQUENCE [LARGE SCALE GENOMIC DNA]</scope>
    <source>
        <strain>Hereford</strain>
    </source>
</reference>
<comment type="function">
    <text evidence="1">Receptor for somatostatin 28 and to a lesser extent for somatostatin-14. The activity of this receptor is mediated by G proteins which inhibit adenylyl cyclase. Increases cell growth inhibition activity of SSTR2 following heterodimerization (By similarity).</text>
</comment>
<comment type="subunit">
    <text evidence="1">Heterodimer with SSTR2. Heterodimerization with SSTR2 increases cell growth inhibition activity of SSTR2 (By similarity).</text>
</comment>
<comment type="subcellular location">
    <subcellularLocation>
        <location evidence="1">Cell membrane</location>
        <topology>Multi-pass membrane protein</topology>
    </subcellularLocation>
</comment>
<comment type="PTM">
    <text evidence="1">Palmitoylated by ZDHHC5, but not ZDHHC3, nor ZDHHC8. Palmitoylation creates an additional intracellular loop which is thought to be important for efficient coupling to G-proteins and may target the protein to lipid rafts (By similarity).</text>
</comment>
<comment type="similarity">
    <text evidence="3">Belongs to the G-protein coupled receptor 1 family.</text>
</comment>
<gene>
    <name type="primary">SSTR5</name>
</gene>
<feature type="chain" id="PRO_0000418365" description="Somatostatin receptor type 5">
    <location>
        <begin position="1"/>
        <end position="368"/>
    </location>
</feature>
<feature type="topological domain" description="Extracellular" evidence="2">
    <location>
        <begin position="1"/>
        <end position="45"/>
    </location>
</feature>
<feature type="transmembrane region" description="Helical" evidence="2">
    <location>
        <begin position="46"/>
        <end position="66"/>
    </location>
</feature>
<feature type="topological domain" description="Cytoplasmic" evidence="2">
    <location>
        <begin position="67"/>
        <end position="77"/>
    </location>
</feature>
<feature type="transmembrane region" description="Helical" evidence="2">
    <location>
        <begin position="78"/>
        <end position="98"/>
    </location>
</feature>
<feature type="topological domain" description="Extracellular" evidence="2">
    <location>
        <begin position="99"/>
        <end position="115"/>
    </location>
</feature>
<feature type="transmembrane region" description="Helical" evidence="2">
    <location>
        <begin position="116"/>
        <end position="136"/>
    </location>
</feature>
<feature type="topological domain" description="Cytoplasmic" evidence="2">
    <location>
        <begin position="137"/>
        <end position="158"/>
    </location>
</feature>
<feature type="transmembrane region" description="Helical" evidence="2">
    <location>
        <begin position="159"/>
        <end position="179"/>
    </location>
</feature>
<feature type="topological domain" description="Extracellular" evidence="2">
    <location>
        <begin position="180"/>
        <end position="207"/>
    </location>
</feature>
<feature type="transmembrane region" description="Helical" evidence="2">
    <location>
        <begin position="208"/>
        <end position="228"/>
    </location>
</feature>
<feature type="topological domain" description="Cytoplasmic" evidence="2">
    <location>
        <begin position="229"/>
        <end position="251"/>
    </location>
</feature>
<feature type="transmembrane region" description="Helical" evidence="2">
    <location>
        <begin position="252"/>
        <end position="272"/>
    </location>
</feature>
<feature type="topological domain" description="Extracellular" evidence="2">
    <location>
        <begin position="273"/>
        <end position="286"/>
    </location>
</feature>
<feature type="transmembrane region" description="Helical" evidence="2">
    <location>
        <begin position="287"/>
        <end position="309"/>
    </location>
</feature>
<feature type="topological domain" description="Cytoplasmic" evidence="2">
    <location>
        <begin position="310"/>
        <end position="368"/>
    </location>
</feature>
<feature type="lipid moiety-binding region" description="S-palmitoyl cysteine; by ZDHHC5" evidence="1">
    <location>
        <position position="322"/>
    </location>
</feature>
<feature type="glycosylation site" description="N-linked (GlcNAc...) asparagine" evidence="2">
    <location>
        <position position="14"/>
    </location>
</feature>
<feature type="glycosylation site" description="N-linked (GlcNAc...) asparagine" evidence="2">
    <location>
        <position position="27"/>
    </location>
</feature>
<feature type="glycosylation site" description="N-linked (GlcNAc...) asparagine" evidence="2">
    <location>
        <position position="189"/>
    </location>
</feature>
<feature type="disulfide bond" evidence="3">
    <location>
        <begin position="113"/>
        <end position="188"/>
    </location>
</feature>
<name>SSR5_BOVIN</name>
<dbReference type="EMBL" id="DAAA02057287">
    <property type="status" value="NOT_ANNOTATED_CDS"/>
    <property type="molecule type" value="Genomic_DNA"/>
</dbReference>
<dbReference type="RefSeq" id="XP_005196928.1">
    <property type="nucleotide sequence ID" value="XM_005196871.3"/>
</dbReference>
<dbReference type="RefSeq" id="XP_005224651.1">
    <property type="nucleotide sequence ID" value="XM_005224594.3"/>
</dbReference>
<dbReference type="RefSeq" id="XP_024840990.1">
    <property type="nucleotide sequence ID" value="XM_024985222.2"/>
</dbReference>
<dbReference type="SMR" id="F1MV99"/>
<dbReference type="FunCoup" id="F1MV99">
    <property type="interactions" value="153"/>
</dbReference>
<dbReference type="STRING" id="9913.ENSBTAP00000047847"/>
<dbReference type="GlyCosmos" id="F1MV99">
    <property type="glycosylation" value="3 sites, No reported glycans"/>
</dbReference>
<dbReference type="GlyGen" id="F1MV99">
    <property type="glycosylation" value="3 sites"/>
</dbReference>
<dbReference type="PaxDb" id="9913-ENSBTAP00000047847"/>
<dbReference type="Ensembl" id="ENSBTAT00000052225.4">
    <property type="protein sequence ID" value="ENSBTAP00000047847.2"/>
    <property type="gene ID" value="ENSBTAG00000039974.4"/>
</dbReference>
<dbReference type="GeneID" id="510344"/>
<dbReference type="VEuPathDB" id="HostDB:ENSBTAG00000039974"/>
<dbReference type="VGNC" id="VGNC:35328">
    <property type="gene designation" value="SSTR5"/>
</dbReference>
<dbReference type="eggNOG" id="KOG3656">
    <property type="taxonomic scope" value="Eukaryota"/>
</dbReference>
<dbReference type="GeneTree" id="ENSGT00940000160265"/>
<dbReference type="HOGENOM" id="CLU_009579_8_1_1"/>
<dbReference type="InParanoid" id="F1MV99"/>
<dbReference type="OMA" id="QEDFQTC"/>
<dbReference type="OrthoDB" id="6076970at2759"/>
<dbReference type="TreeFam" id="TF315737"/>
<dbReference type="Reactome" id="R-BTA-375276">
    <property type="pathway name" value="Peptide ligand-binding receptors"/>
</dbReference>
<dbReference type="Reactome" id="R-BTA-418594">
    <property type="pathway name" value="G alpha (i) signalling events"/>
</dbReference>
<dbReference type="Proteomes" id="UP000009136">
    <property type="component" value="Chromosome 25"/>
</dbReference>
<dbReference type="Bgee" id="ENSBTAG00000039974">
    <property type="expression patterns" value="Expressed in prostate gland and 20 other cell types or tissues"/>
</dbReference>
<dbReference type="GO" id="GO:0043005">
    <property type="term" value="C:neuron projection"/>
    <property type="evidence" value="ECO:0000318"/>
    <property type="project" value="GO_Central"/>
</dbReference>
<dbReference type="GO" id="GO:0005886">
    <property type="term" value="C:plasma membrane"/>
    <property type="evidence" value="ECO:0000318"/>
    <property type="project" value="GO_Central"/>
</dbReference>
<dbReference type="GO" id="GO:0042923">
    <property type="term" value="F:neuropeptide binding"/>
    <property type="evidence" value="ECO:0000318"/>
    <property type="project" value="GO_Central"/>
</dbReference>
<dbReference type="GO" id="GO:0004994">
    <property type="term" value="F:somatostatin receptor activity"/>
    <property type="evidence" value="ECO:0000318"/>
    <property type="project" value="GO_Central"/>
</dbReference>
<dbReference type="GO" id="GO:0071385">
    <property type="term" value="P:cellular response to glucocorticoid stimulus"/>
    <property type="evidence" value="ECO:0000318"/>
    <property type="project" value="GO_Central"/>
</dbReference>
<dbReference type="GO" id="GO:0042593">
    <property type="term" value="P:glucose homeostasis"/>
    <property type="evidence" value="ECO:0007669"/>
    <property type="project" value="Ensembl"/>
</dbReference>
<dbReference type="GO" id="GO:0007218">
    <property type="term" value="P:neuropeptide signaling pathway"/>
    <property type="evidence" value="ECO:0000318"/>
    <property type="project" value="GO_Central"/>
</dbReference>
<dbReference type="GO" id="GO:0032467">
    <property type="term" value="P:positive regulation of cytokinesis"/>
    <property type="evidence" value="ECO:0007669"/>
    <property type="project" value="Ensembl"/>
</dbReference>
<dbReference type="GO" id="GO:0050796">
    <property type="term" value="P:regulation of insulin secretion"/>
    <property type="evidence" value="ECO:0000318"/>
    <property type="project" value="GO_Central"/>
</dbReference>
<dbReference type="FunFam" id="1.20.1070.10:FF:000039">
    <property type="entry name" value="somatostatin receptor type 2"/>
    <property type="match status" value="1"/>
</dbReference>
<dbReference type="Gene3D" id="1.20.1070.10">
    <property type="entry name" value="Rhodopsin 7-helix transmembrane proteins"/>
    <property type="match status" value="1"/>
</dbReference>
<dbReference type="InterPro" id="IPR000276">
    <property type="entry name" value="GPCR_Rhodpsn"/>
</dbReference>
<dbReference type="InterPro" id="IPR017452">
    <property type="entry name" value="GPCR_Rhodpsn_7TM"/>
</dbReference>
<dbReference type="InterPro" id="IPR000586">
    <property type="entry name" value="Somatstn_rcpt"/>
</dbReference>
<dbReference type="InterPro" id="IPR001184">
    <property type="entry name" value="Somatstn_rcpt_5"/>
</dbReference>
<dbReference type="PANTHER" id="PTHR24229">
    <property type="entry name" value="NEUROPEPTIDES RECEPTOR"/>
    <property type="match status" value="1"/>
</dbReference>
<dbReference type="PANTHER" id="PTHR24229:SF20">
    <property type="entry name" value="SOMATOSTATIN RECEPTOR TYPE 5"/>
    <property type="match status" value="1"/>
</dbReference>
<dbReference type="Pfam" id="PF00001">
    <property type="entry name" value="7tm_1"/>
    <property type="match status" value="1"/>
</dbReference>
<dbReference type="PRINTS" id="PR00237">
    <property type="entry name" value="GPCRRHODOPSN"/>
</dbReference>
<dbReference type="PRINTS" id="PR00246">
    <property type="entry name" value="SOMATOSTATNR"/>
</dbReference>
<dbReference type="PRINTS" id="PR00591">
    <property type="entry name" value="SOMATOSTTN5R"/>
</dbReference>
<dbReference type="SMART" id="SM01381">
    <property type="entry name" value="7TM_GPCR_Srsx"/>
    <property type="match status" value="1"/>
</dbReference>
<dbReference type="SUPFAM" id="SSF81321">
    <property type="entry name" value="Family A G protein-coupled receptor-like"/>
    <property type="match status" value="1"/>
</dbReference>
<dbReference type="PROSITE" id="PS00237">
    <property type="entry name" value="G_PROTEIN_RECEP_F1_1"/>
    <property type="match status" value="1"/>
</dbReference>
<dbReference type="PROSITE" id="PS50262">
    <property type="entry name" value="G_PROTEIN_RECEP_F1_2"/>
    <property type="match status" value="1"/>
</dbReference>
<organism>
    <name type="scientific">Bos taurus</name>
    <name type="common">Bovine</name>
    <dbReference type="NCBI Taxonomy" id="9913"/>
    <lineage>
        <taxon>Eukaryota</taxon>
        <taxon>Metazoa</taxon>
        <taxon>Chordata</taxon>
        <taxon>Craniata</taxon>
        <taxon>Vertebrata</taxon>
        <taxon>Euteleostomi</taxon>
        <taxon>Mammalia</taxon>
        <taxon>Eutheria</taxon>
        <taxon>Laurasiatheria</taxon>
        <taxon>Artiodactyla</taxon>
        <taxon>Ruminantia</taxon>
        <taxon>Pecora</taxon>
        <taxon>Bovidae</taxon>
        <taxon>Bovinae</taxon>
        <taxon>Bos</taxon>
    </lineage>
</organism>
<sequence>MEPLFPASPLTTWNTSSVVPSGSGDENGTLAGLGPSPGARAVVVPVLYLLVCAVGLGGNTLVIYVVLRHAKMKTVTNIYILNLAVADVLLMLGLPFVATQNAISYWPFGPVLCRLVMTLDGINQFTSIFCLTVMSVDRYLAVVHPIRSARWRRPRVAKLASAAVWAFSLVMSLPLVVFADIQEGWNTCNLSWPEPVGLWGAVFIIYTSVLGFFGPLLVICLCYLLIVVKLKASGVRVGSTRRRSERKVTRMVVVVVLVFAGCWLPFFIVNIVNLAFALPEEPASAGAYFFVVVLSYANSCANPLLYGFLSDNFRQSFRKVLCLRKGYGAGAEDADATEPQPGPSSRLQEAMMPVRSCKANGLMQTSKL</sequence>
<keyword id="KW-1003">Cell membrane</keyword>
<keyword id="KW-1015">Disulfide bond</keyword>
<keyword id="KW-0297">G-protein coupled receptor</keyword>
<keyword id="KW-0325">Glycoprotein</keyword>
<keyword id="KW-0449">Lipoprotein</keyword>
<keyword id="KW-0472">Membrane</keyword>
<keyword id="KW-0564">Palmitate</keyword>
<keyword id="KW-0675">Receptor</keyword>
<keyword id="KW-1185">Reference proteome</keyword>
<keyword id="KW-0807">Transducer</keyword>
<keyword id="KW-0812">Transmembrane</keyword>
<keyword id="KW-1133">Transmembrane helix</keyword>
<proteinExistence type="inferred from homology"/>
<accession>F1MV99</accession>
<evidence type="ECO:0000250" key="1"/>
<evidence type="ECO:0000255" key="2"/>
<evidence type="ECO:0000255" key="3">
    <source>
        <dbReference type="PROSITE-ProRule" id="PRU00521"/>
    </source>
</evidence>
<protein>
    <recommendedName>
        <fullName>Somatostatin receptor type 5</fullName>
        <shortName>SS-5-R</shortName>
        <shortName>SS5-R</shortName>
        <shortName>SS5R</shortName>
    </recommendedName>
</protein>